<organism>
    <name type="scientific">Shewanella pealeana (strain ATCC 700345 / ANG-SQ1)</name>
    <dbReference type="NCBI Taxonomy" id="398579"/>
    <lineage>
        <taxon>Bacteria</taxon>
        <taxon>Pseudomonadati</taxon>
        <taxon>Pseudomonadota</taxon>
        <taxon>Gammaproteobacteria</taxon>
        <taxon>Alteromonadales</taxon>
        <taxon>Shewanellaceae</taxon>
        <taxon>Shewanella</taxon>
    </lineage>
</organism>
<protein>
    <recommendedName>
        <fullName evidence="1">tRNA pseudouridine synthase A</fullName>
        <ecNumber evidence="1">5.4.99.12</ecNumber>
    </recommendedName>
    <alternativeName>
        <fullName evidence="1">tRNA pseudouridine(38-40) synthase</fullName>
    </alternativeName>
    <alternativeName>
        <fullName evidence="1">tRNA pseudouridylate synthase I</fullName>
    </alternativeName>
    <alternativeName>
        <fullName evidence="1">tRNA-uridine isomerase I</fullName>
    </alternativeName>
</protein>
<reference key="1">
    <citation type="submission" date="2007-10" db="EMBL/GenBank/DDBJ databases">
        <title>Complete sequence of Shewanella pealeana ATCC 700345.</title>
        <authorList>
            <consortium name="US DOE Joint Genome Institute"/>
            <person name="Copeland A."/>
            <person name="Lucas S."/>
            <person name="Lapidus A."/>
            <person name="Barry K."/>
            <person name="Glavina del Rio T."/>
            <person name="Dalin E."/>
            <person name="Tice H."/>
            <person name="Pitluck S."/>
            <person name="Chertkov O."/>
            <person name="Brettin T."/>
            <person name="Bruce D."/>
            <person name="Detter J.C."/>
            <person name="Han C."/>
            <person name="Schmutz J."/>
            <person name="Larimer F."/>
            <person name="Land M."/>
            <person name="Hauser L."/>
            <person name="Kyrpides N."/>
            <person name="Kim E."/>
            <person name="Zhao J.-S.Z."/>
            <person name="Manno D."/>
            <person name="Hawari J."/>
            <person name="Richardson P."/>
        </authorList>
    </citation>
    <scope>NUCLEOTIDE SEQUENCE [LARGE SCALE GENOMIC DNA]</scope>
    <source>
        <strain>ATCC 700345 / ANG-SQ1</strain>
    </source>
</reference>
<evidence type="ECO:0000255" key="1">
    <source>
        <dbReference type="HAMAP-Rule" id="MF_00171"/>
    </source>
</evidence>
<proteinExistence type="inferred from homology"/>
<feature type="chain" id="PRO_1000077103" description="tRNA pseudouridine synthase A">
    <location>
        <begin position="1"/>
        <end position="261"/>
    </location>
</feature>
<feature type="active site" description="Nucleophile" evidence="1">
    <location>
        <position position="51"/>
    </location>
</feature>
<feature type="binding site" evidence="1">
    <location>
        <position position="109"/>
    </location>
    <ligand>
        <name>substrate</name>
    </ligand>
</feature>
<accession>A8H305</accession>
<name>TRUA_SHEPA</name>
<comment type="function">
    <text evidence="1">Formation of pseudouridine at positions 38, 39 and 40 in the anticodon stem and loop of transfer RNAs.</text>
</comment>
<comment type="catalytic activity">
    <reaction evidence="1">
        <text>uridine(38/39/40) in tRNA = pseudouridine(38/39/40) in tRNA</text>
        <dbReference type="Rhea" id="RHEA:22376"/>
        <dbReference type="Rhea" id="RHEA-COMP:10085"/>
        <dbReference type="Rhea" id="RHEA-COMP:10087"/>
        <dbReference type="ChEBI" id="CHEBI:65314"/>
        <dbReference type="ChEBI" id="CHEBI:65315"/>
        <dbReference type="EC" id="5.4.99.12"/>
    </reaction>
</comment>
<comment type="subunit">
    <text evidence="1">Homodimer.</text>
</comment>
<comment type="similarity">
    <text evidence="1">Belongs to the tRNA pseudouridine synthase TruA family.</text>
</comment>
<sequence>MRVALGIEYDGSQYFGWQRQAEVDTVQERLEKALSIVANEPIAVHCAGRTDAGVHATGQVVHFETNAIRKETAWTLGVNVNLPDNIAVRWVKVVDDEFHARFTATARRYRYMIYNHQLRPGILRSGVSHYPGDIDESKMHQAAQYLLGEQDFTSFRAVHCQSNTPFRCVHEVNVTRQGMYICVDIKANAFLHHMVRNIVGSLLEVGLGNQSVEWIEQLLALKDRNKAAATAKPNGLYLVDVTYPESYQLPKLSLGPLFMLD</sequence>
<gene>
    <name evidence="1" type="primary">truA</name>
    <name type="ordered locus">Spea_1617</name>
</gene>
<keyword id="KW-0413">Isomerase</keyword>
<keyword id="KW-1185">Reference proteome</keyword>
<keyword id="KW-0819">tRNA processing</keyword>
<dbReference type="EC" id="5.4.99.12" evidence="1"/>
<dbReference type="EMBL" id="CP000851">
    <property type="protein sequence ID" value="ABV86942.1"/>
    <property type="molecule type" value="Genomic_DNA"/>
</dbReference>
<dbReference type="RefSeq" id="WP_012154864.1">
    <property type="nucleotide sequence ID" value="NC_009901.1"/>
</dbReference>
<dbReference type="SMR" id="A8H305"/>
<dbReference type="STRING" id="398579.Spea_1617"/>
<dbReference type="KEGG" id="spl:Spea_1617"/>
<dbReference type="eggNOG" id="COG0101">
    <property type="taxonomic scope" value="Bacteria"/>
</dbReference>
<dbReference type="HOGENOM" id="CLU_014673_0_2_6"/>
<dbReference type="OrthoDB" id="9811823at2"/>
<dbReference type="Proteomes" id="UP000002608">
    <property type="component" value="Chromosome"/>
</dbReference>
<dbReference type="GO" id="GO:0003723">
    <property type="term" value="F:RNA binding"/>
    <property type="evidence" value="ECO:0007669"/>
    <property type="project" value="InterPro"/>
</dbReference>
<dbReference type="GO" id="GO:0160147">
    <property type="term" value="F:tRNA pseudouridine(38-40) synthase activity"/>
    <property type="evidence" value="ECO:0007669"/>
    <property type="project" value="UniProtKB-EC"/>
</dbReference>
<dbReference type="GO" id="GO:0031119">
    <property type="term" value="P:tRNA pseudouridine synthesis"/>
    <property type="evidence" value="ECO:0007669"/>
    <property type="project" value="UniProtKB-UniRule"/>
</dbReference>
<dbReference type="CDD" id="cd02570">
    <property type="entry name" value="PseudoU_synth_EcTruA"/>
    <property type="match status" value="1"/>
</dbReference>
<dbReference type="FunFam" id="3.30.70.580:FF:000001">
    <property type="entry name" value="tRNA pseudouridine synthase A"/>
    <property type="match status" value="1"/>
</dbReference>
<dbReference type="FunFam" id="3.30.70.660:FF:000001">
    <property type="entry name" value="tRNA pseudouridine synthase A"/>
    <property type="match status" value="1"/>
</dbReference>
<dbReference type="Gene3D" id="3.30.70.660">
    <property type="entry name" value="Pseudouridine synthase I, catalytic domain, C-terminal subdomain"/>
    <property type="match status" value="1"/>
</dbReference>
<dbReference type="Gene3D" id="3.30.70.580">
    <property type="entry name" value="Pseudouridine synthase I, catalytic domain, N-terminal subdomain"/>
    <property type="match status" value="1"/>
</dbReference>
<dbReference type="HAMAP" id="MF_00171">
    <property type="entry name" value="TruA"/>
    <property type="match status" value="1"/>
</dbReference>
<dbReference type="InterPro" id="IPR020103">
    <property type="entry name" value="PsdUridine_synth_cat_dom_sf"/>
</dbReference>
<dbReference type="InterPro" id="IPR001406">
    <property type="entry name" value="PsdUridine_synth_TruA"/>
</dbReference>
<dbReference type="InterPro" id="IPR020097">
    <property type="entry name" value="PsdUridine_synth_TruA_a/b_dom"/>
</dbReference>
<dbReference type="InterPro" id="IPR020095">
    <property type="entry name" value="PsdUridine_synth_TruA_C"/>
</dbReference>
<dbReference type="InterPro" id="IPR020094">
    <property type="entry name" value="TruA/RsuA/RluB/E/F_N"/>
</dbReference>
<dbReference type="NCBIfam" id="TIGR00071">
    <property type="entry name" value="hisT_truA"/>
    <property type="match status" value="1"/>
</dbReference>
<dbReference type="PANTHER" id="PTHR11142">
    <property type="entry name" value="PSEUDOURIDYLATE SYNTHASE"/>
    <property type="match status" value="1"/>
</dbReference>
<dbReference type="PANTHER" id="PTHR11142:SF0">
    <property type="entry name" value="TRNA PSEUDOURIDINE SYNTHASE-LIKE 1"/>
    <property type="match status" value="1"/>
</dbReference>
<dbReference type="Pfam" id="PF01416">
    <property type="entry name" value="PseudoU_synth_1"/>
    <property type="match status" value="2"/>
</dbReference>
<dbReference type="PIRSF" id="PIRSF001430">
    <property type="entry name" value="tRNA_psdUrid_synth"/>
    <property type="match status" value="1"/>
</dbReference>
<dbReference type="SUPFAM" id="SSF55120">
    <property type="entry name" value="Pseudouridine synthase"/>
    <property type="match status" value="1"/>
</dbReference>